<name>Y5373_DELAS</name>
<protein>
    <recommendedName>
        <fullName evidence="1">UPF0502 protein Daci_5373</fullName>
    </recommendedName>
</protein>
<accession>A9BNV7</accession>
<gene>
    <name type="ordered locus">Daci_5373</name>
</gene>
<organism>
    <name type="scientific">Delftia acidovorans (strain DSM 14801 / SPH-1)</name>
    <dbReference type="NCBI Taxonomy" id="398578"/>
    <lineage>
        <taxon>Bacteria</taxon>
        <taxon>Pseudomonadati</taxon>
        <taxon>Pseudomonadota</taxon>
        <taxon>Betaproteobacteria</taxon>
        <taxon>Burkholderiales</taxon>
        <taxon>Comamonadaceae</taxon>
        <taxon>Delftia</taxon>
    </lineage>
</organism>
<feature type="chain" id="PRO_0000382556" description="UPF0502 protein Daci_5373">
    <location>
        <begin position="1"/>
        <end position="226"/>
    </location>
</feature>
<proteinExistence type="inferred from homology"/>
<keyword id="KW-1185">Reference proteome</keyword>
<dbReference type="EMBL" id="CP000884">
    <property type="protein sequence ID" value="ABX38002.1"/>
    <property type="status" value="ALT_INIT"/>
    <property type="molecule type" value="Genomic_DNA"/>
</dbReference>
<dbReference type="RefSeq" id="WP_043783684.1">
    <property type="nucleotide sequence ID" value="NC_010002.1"/>
</dbReference>
<dbReference type="SMR" id="A9BNV7"/>
<dbReference type="STRING" id="398578.Daci_5373"/>
<dbReference type="GeneID" id="24118532"/>
<dbReference type="KEGG" id="dac:Daci_5373"/>
<dbReference type="eggNOG" id="COG3132">
    <property type="taxonomic scope" value="Bacteria"/>
</dbReference>
<dbReference type="HOGENOM" id="CLU_057831_0_0_4"/>
<dbReference type="Proteomes" id="UP000000784">
    <property type="component" value="Chromosome"/>
</dbReference>
<dbReference type="Gene3D" id="1.10.10.10">
    <property type="entry name" value="Winged helix-like DNA-binding domain superfamily/Winged helix DNA-binding domain"/>
    <property type="match status" value="2"/>
</dbReference>
<dbReference type="HAMAP" id="MF_01584">
    <property type="entry name" value="UPF0502"/>
    <property type="match status" value="1"/>
</dbReference>
<dbReference type="InterPro" id="IPR007432">
    <property type="entry name" value="DUF480"/>
</dbReference>
<dbReference type="InterPro" id="IPR036388">
    <property type="entry name" value="WH-like_DNA-bd_sf"/>
</dbReference>
<dbReference type="InterPro" id="IPR036390">
    <property type="entry name" value="WH_DNA-bd_sf"/>
</dbReference>
<dbReference type="PANTHER" id="PTHR38768">
    <property type="entry name" value="UPF0502 PROTEIN YCEH"/>
    <property type="match status" value="1"/>
</dbReference>
<dbReference type="PANTHER" id="PTHR38768:SF1">
    <property type="entry name" value="UPF0502 PROTEIN YCEH"/>
    <property type="match status" value="1"/>
</dbReference>
<dbReference type="Pfam" id="PF04337">
    <property type="entry name" value="DUF480"/>
    <property type="match status" value="1"/>
</dbReference>
<dbReference type="SUPFAM" id="SSF46785">
    <property type="entry name" value="Winged helix' DNA-binding domain"/>
    <property type="match status" value="2"/>
</dbReference>
<comment type="similarity">
    <text evidence="1">Belongs to the UPF0502 family.</text>
</comment>
<comment type="sequence caution" evidence="2">
    <conflict type="erroneous initiation">
        <sequence resource="EMBL-CDS" id="ABX38002"/>
    </conflict>
</comment>
<sequence length="226" mass="24690">MPFDPRTTPLTAVEARVLATLMEKARTVPDSYPLTLNALVTGCNQKSSRDPVMEVSEGEAQEALDSLRLRTMSVQISSARATRWEHNFPRGVGVPDQSAVLLSLLMLRGPQTAGELRINSERWHRFADISSVEAFLEELRERSEEKGGPLVVLLPRAPGAREQRWAHLLCGPVDVNAMAQPPAAAGARGDALAQRVVDLEAQVQQLQARLAHVYAQLGLEEPGQSS</sequence>
<reference key="1">
    <citation type="submission" date="2007-11" db="EMBL/GenBank/DDBJ databases">
        <title>Complete sequence of Delftia acidovorans DSM 14801 / SPH-1.</title>
        <authorList>
            <person name="Copeland A."/>
            <person name="Lucas S."/>
            <person name="Lapidus A."/>
            <person name="Barry K."/>
            <person name="Glavina del Rio T."/>
            <person name="Dalin E."/>
            <person name="Tice H."/>
            <person name="Pitluck S."/>
            <person name="Lowry S."/>
            <person name="Clum A."/>
            <person name="Schmutz J."/>
            <person name="Larimer F."/>
            <person name="Land M."/>
            <person name="Hauser L."/>
            <person name="Kyrpides N."/>
            <person name="Kim E."/>
            <person name="Schleheck D."/>
            <person name="Richardson P."/>
        </authorList>
    </citation>
    <scope>NUCLEOTIDE SEQUENCE [LARGE SCALE GENOMIC DNA]</scope>
    <source>
        <strain>DSM 14801 / SPH-1</strain>
    </source>
</reference>
<evidence type="ECO:0000255" key="1">
    <source>
        <dbReference type="HAMAP-Rule" id="MF_01584"/>
    </source>
</evidence>
<evidence type="ECO:0000305" key="2"/>